<evidence type="ECO:0000250" key="1"/>
<evidence type="ECO:0000250" key="2">
    <source>
        <dbReference type="UniProtKB" id="P40014"/>
    </source>
</evidence>
<evidence type="ECO:0000255" key="3"/>
<evidence type="ECO:0000305" key="4"/>
<gene>
    <name type="primary">SPC25</name>
    <name type="ordered locus">CNBE3450</name>
</gene>
<organism>
    <name type="scientific">Cryptococcus neoformans var. neoformans serotype D (strain B-3501A)</name>
    <name type="common">Filobasidiella neoformans</name>
    <dbReference type="NCBI Taxonomy" id="283643"/>
    <lineage>
        <taxon>Eukaryota</taxon>
        <taxon>Fungi</taxon>
        <taxon>Dikarya</taxon>
        <taxon>Basidiomycota</taxon>
        <taxon>Agaricomycotina</taxon>
        <taxon>Tremellomycetes</taxon>
        <taxon>Tremellales</taxon>
        <taxon>Cryptococcaceae</taxon>
        <taxon>Cryptococcus</taxon>
        <taxon>Cryptococcus neoformans species complex</taxon>
    </lineage>
</organism>
<protein>
    <recommendedName>
        <fullName>Probable kinetochore protein SPC25</fullName>
    </recommendedName>
</protein>
<feature type="chain" id="PRO_0000410295" description="Probable kinetochore protein SPC25">
    <location>
        <begin position="1"/>
        <end position="272"/>
    </location>
</feature>
<feature type="coiled-coil region" evidence="3">
    <location>
        <begin position="62"/>
        <end position="174"/>
    </location>
</feature>
<accession>P0CR67</accession>
<accession>Q55S37</accession>
<accession>Q5KGI8</accession>
<reference key="1">
    <citation type="journal article" date="2005" name="Science">
        <title>The genome of the basidiomycetous yeast and human pathogen Cryptococcus neoformans.</title>
        <authorList>
            <person name="Loftus B.J."/>
            <person name="Fung E."/>
            <person name="Roncaglia P."/>
            <person name="Rowley D."/>
            <person name="Amedeo P."/>
            <person name="Bruno D."/>
            <person name="Vamathevan J."/>
            <person name="Miranda M."/>
            <person name="Anderson I.J."/>
            <person name="Fraser J.A."/>
            <person name="Allen J.E."/>
            <person name="Bosdet I.E."/>
            <person name="Brent M.R."/>
            <person name="Chiu R."/>
            <person name="Doering T.L."/>
            <person name="Donlin M.J."/>
            <person name="D'Souza C.A."/>
            <person name="Fox D.S."/>
            <person name="Grinberg V."/>
            <person name="Fu J."/>
            <person name="Fukushima M."/>
            <person name="Haas B.J."/>
            <person name="Huang J.C."/>
            <person name="Janbon G."/>
            <person name="Jones S.J.M."/>
            <person name="Koo H.L."/>
            <person name="Krzywinski M.I."/>
            <person name="Kwon-Chung K.J."/>
            <person name="Lengeler K.B."/>
            <person name="Maiti R."/>
            <person name="Marra M.A."/>
            <person name="Marra R.E."/>
            <person name="Mathewson C.A."/>
            <person name="Mitchell T.G."/>
            <person name="Pertea M."/>
            <person name="Riggs F.R."/>
            <person name="Salzberg S.L."/>
            <person name="Schein J.E."/>
            <person name="Shvartsbeyn A."/>
            <person name="Shin H."/>
            <person name="Shumway M."/>
            <person name="Specht C.A."/>
            <person name="Suh B.B."/>
            <person name="Tenney A."/>
            <person name="Utterback T.R."/>
            <person name="Wickes B.L."/>
            <person name="Wortman J.R."/>
            <person name="Wye N.H."/>
            <person name="Kronstad J.W."/>
            <person name="Lodge J.K."/>
            <person name="Heitman J."/>
            <person name="Davis R.W."/>
            <person name="Fraser C.M."/>
            <person name="Hyman R.W."/>
        </authorList>
    </citation>
    <scope>NUCLEOTIDE SEQUENCE [LARGE SCALE GENOMIC DNA]</scope>
    <source>
        <strain>B-3501A</strain>
    </source>
</reference>
<sequence>MAPTTYAVPPRPASLHFLLESSTSKNGVPSLDLRWEPFQRHIESFLNAIDAYTQAARTEIVARATDHTAAVRDLKADKEEMERGIQLQRESEGEMLATLEAERHVVADLNASLSHLQSSLTKIKEKSSALDAELQSERKEVKAMQAEKERQTNVLNNMRERDTTELKQLEEALGWRVEGIKQDQLLMRFTLIDPEDPAREFSIIVDVSKQVYSVPNCDPPIPSLPDLVRQLNFDRDLFAFIKRVRIAFRALIPNPPNPSTKFDDLTGPSRSR</sequence>
<keyword id="KW-0131">Cell cycle</keyword>
<keyword id="KW-0132">Cell division</keyword>
<keyword id="KW-0137">Centromere</keyword>
<keyword id="KW-0158">Chromosome</keyword>
<keyword id="KW-0175">Coiled coil</keyword>
<keyword id="KW-0995">Kinetochore</keyword>
<keyword id="KW-0498">Mitosis</keyword>
<keyword id="KW-0539">Nucleus</keyword>
<dbReference type="EMBL" id="AAEY01000028">
    <property type="protein sequence ID" value="EAL20424.1"/>
    <property type="molecule type" value="Genomic_DNA"/>
</dbReference>
<dbReference type="RefSeq" id="XP_775071.1">
    <property type="nucleotide sequence ID" value="XM_769978.1"/>
</dbReference>
<dbReference type="SMR" id="P0CR67"/>
<dbReference type="EnsemblFungi" id="AAW43605">
    <property type="protein sequence ID" value="AAW43605"/>
    <property type="gene ID" value="CNE03460"/>
</dbReference>
<dbReference type="GeneID" id="4936355"/>
<dbReference type="KEGG" id="cnb:CNBE3450"/>
<dbReference type="VEuPathDB" id="FungiDB:CNBE3450"/>
<dbReference type="HOGENOM" id="CLU_093947_0_0_1"/>
<dbReference type="OrthoDB" id="6321at5206"/>
<dbReference type="GO" id="GO:0031262">
    <property type="term" value="C:Ndc80 complex"/>
    <property type="evidence" value="ECO:0000250"/>
    <property type="project" value="UniProtKB"/>
</dbReference>
<dbReference type="GO" id="GO:0005634">
    <property type="term" value="C:nucleus"/>
    <property type="evidence" value="ECO:0007669"/>
    <property type="project" value="UniProtKB-SubCell"/>
</dbReference>
<dbReference type="GO" id="GO:0051301">
    <property type="term" value="P:cell division"/>
    <property type="evidence" value="ECO:0007669"/>
    <property type="project" value="UniProtKB-KW"/>
</dbReference>
<dbReference type="GO" id="GO:0007059">
    <property type="term" value="P:chromosome segregation"/>
    <property type="evidence" value="ECO:0007669"/>
    <property type="project" value="InterPro"/>
</dbReference>
<dbReference type="CDD" id="cd23784">
    <property type="entry name" value="RWD_Spc25"/>
    <property type="match status" value="1"/>
</dbReference>
<dbReference type="Gene3D" id="3.30.457.50">
    <property type="entry name" value="Chromosome segregation protein Spc25"/>
    <property type="match status" value="1"/>
</dbReference>
<dbReference type="InterPro" id="IPR045143">
    <property type="entry name" value="Spc25"/>
</dbReference>
<dbReference type="InterPro" id="IPR013255">
    <property type="entry name" value="Spc25_C"/>
</dbReference>
<dbReference type="PANTHER" id="PTHR14281:SF0">
    <property type="entry name" value="KINETOCHORE PROTEIN SPC25"/>
    <property type="match status" value="1"/>
</dbReference>
<dbReference type="PANTHER" id="PTHR14281">
    <property type="entry name" value="KINETOCHORE PROTEIN SPC25-RELATED"/>
    <property type="match status" value="1"/>
</dbReference>
<dbReference type="Pfam" id="PF08234">
    <property type="entry name" value="Spindle_Spc25"/>
    <property type="match status" value="1"/>
</dbReference>
<name>SPC25_CRYNB</name>
<comment type="function">
    <text evidence="1">Acts as a component of the essential kinetochore-associated NDC80 complex, which is required for chromosome segregation and spindle checkpoint activity.</text>
</comment>
<comment type="subunit">
    <text evidence="1">Component of the NDC80 complex, which consists of at least NDC80, NUF2 and SPC25.</text>
</comment>
<comment type="subcellular location">
    <subcellularLocation>
        <location evidence="2">Nucleus</location>
    </subcellularLocation>
    <subcellularLocation>
        <location evidence="2">Chromosome</location>
        <location evidence="2">Centromere</location>
        <location evidence="2">Kinetochore</location>
    </subcellularLocation>
    <text evidence="2">Associated with kinetochores.</text>
</comment>
<comment type="similarity">
    <text evidence="4">Belongs to the SPC25 family.</text>
</comment>
<proteinExistence type="inferred from homology"/>